<gene>
    <name evidence="1" type="primary">cysD</name>
    <name type="ordered locus">SeHA_C3125</name>
</gene>
<comment type="function">
    <text evidence="1">With CysN forms the ATP sulfurylase (ATPS) that catalyzes the adenylation of sulfate producing adenosine 5'-phosphosulfate (APS) and diphosphate, the first enzymatic step in sulfur assimilation pathway. APS synthesis involves the formation of a high-energy phosphoric-sulfuric acid anhydride bond driven by GTP hydrolysis by CysN coupled to ATP hydrolysis by CysD.</text>
</comment>
<comment type="catalytic activity">
    <reaction evidence="1">
        <text>sulfate + ATP + H(+) = adenosine 5'-phosphosulfate + diphosphate</text>
        <dbReference type="Rhea" id="RHEA:18133"/>
        <dbReference type="ChEBI" id="CHEBI:15378"/>
        <dbReference type="ChEBI" id="CHEBI:16189"/>
        <dbReference type="ChEBI" id="CHEBI:30616"/>
        <dbReference type="ChEBI" id="CHEBI:33019"/>
        <dbReference type="ChEBI" id="CHEBI:58243"/>
        <dbReference type="EC" id="2.7.7.4"/>
    </reaction>
</comment>
<comment type="pathway">
    <text evidence="1">Sulfur metabolism; hydrogen sulfide biosynthesis; sulfite from sulfate: step 1/3.</text>
</comment>
<comment type="subunit">
    <text evidence="1">Heterodimer composed of CysD, the smaller subunit, and CysN.</text>
</comment>
<comment type="similarity">
    <text evidence="1">Belongs to the PAPS reductase family. CysD subfamily.</text>
</comment>
<dbReference type="EC" id="2.7.7.4" evidence="1"/>
<dbReference type="EMBL" id="CP001120">
    <property type="protein sequence ID" value="ACF68693.1"/>
    <property type="molecule type" value="Genomic_DNA"/>
</dbReference>
<dbReference type="RefSeq" id="WP_000372384.1">
    <property type="nucleotide sequence ID" value="NC_011083.1"/>
</dbReference>
<dbReference type="SMR" id="B4TFX2"/>
<dbReference type="KEGG" id="seh:SeHA_C3125"/>
<dbReference type="HOGENOM" id="CLU_043026_0_0_6"/>
<dbReference type="UniPathway" id="UPA00140">
    <property type="reaction ID" value="UER00204"/>
</dbReference>
<dbReference type="Proteomes" id="UP000001866">
    <property type="component" value="Chromosome"/>
</dbReference>
<dbReference type="GO" id="GO:0005524">
    <property type="term" value="F:ATP binding"/>
    <property type="evidence" value="ECO:0007669"/>
    <property type="project" value="UniProtKB-KW"/>
</dbReference>
<dbReference type="GO" id="GO:0004781">
    <property type="term" value="F:sulfate adenylyltransferase (ATP) activity"/>
    <property type="evidence" value="ECO:0007669"/>
    <property type="project" value="UniProtKB-UniRule"/>
</dbReference>
<dbReference type="GO" id="GO:0070814">
    <property type="term" value="P:hydrogen sulfide biosynthetic process"/>
    <property type="evidence" value="ECO:0007669"/>
    <property type="project" value="UniProtKB-UniRule"/>
</dbReference>
<dbReference type="GO" id="GO:0000103">
    <property type="term" value="P:sulfate assimilation"/>
    <property type="evidence" value="ECO:0007669"/>
    <property type="project" value="UniProtKB-UniRule"/>
</dbReference>
<dbReference type="CDD" id="cd23946">
    <property type="entry name" value="Sulfate_adenylyltransferase_2"/>
    <property type="match status" value="1"/>
</dbReference>
<dbReference type="FunFam" id="3.40.50.620:FF:000002">
    <property type="entry name" value="Sulfate adenylyltransferase subunit 2"/>
    <property type="match status" value="1"/>
</dbReference>
<dbReference type="Gene3D" id="3.40.50.620">
    <property type="entry name" value="HUPs"/>
    <property type="match status" value="1"/>
</dbReference>
<dbReference type="HAMAP" id="MF_00064">
    <property type="entry name" value="Sulf_adenylyltr_sub2"/>
    <property type="match status" value="1"/>
</dbReference>
<dbReference type="InterPro" id="IPR002500">
    <property type="entry name" value="PAPS_reduct_dom"/>
</dbReference>
<dbReference type="InterPro" id="IPR014729">
    <property type="entry name" value="Rossmann-like_a/b/a_fold"/>
</dbReference>
<dbReference type="InterPro" id="IPR011784">
    <property type="entry name" value="SO4_adenylTrfase_ssu"/>
</dbReference>
<dbReference type="InterPro" id="IPR050128">
    <property type="entry name" value="Sulfate_adenylyltrnsfr_sub2"/>
</dbReference>
<dbReference type="NCBIfam" id="TIGR02039">
    <property type="entry name" value="CysD"/>
    <property type="match status" value="1"/>
</dbReference>
<dbReference type="NCBIfam" id="NF003587">
    <property type="entry name" value="PRK05253.1"/>
    <property type="match status" value="1"/>
</dbReference>
<dbReference type="NCBIfam" id="NF009214">
    <property type="entry name" value="PRK12563.1"/>
    <property type="match status" value="1"/>
</dbReference>
<dbReference type="PANTHER" id="PTHR43196">
    <property type="entry name" value="SULFATE ADENYLYLTRANSFERASE SUBUNIT 2"/>
    <property type="match status" value="1"/>
</dbReference>
<dbReference type="PANTHER" id="PTHR43196:SF1">
    <property type="entry name" value="SULFATE ADENYLYLTRANSFERASE SUBUNIT 2"/>
    <property type="match status" value="1"/>
</dbReference>
<dbReference type="Pfam" id="PF01507">
    <property type="entry name" value="PAPS_reduct"/>
    <property type="match status" value="1"/>
</dbReference>
<dbReference type="PIRSF" id="PIRSF002936">
    <property type="entry name" value="CysDAde_trans"/>
    <property type="match status" value="1"/>
</dbReference>
<dbReference type="SUPFAM" id="SSF52402">
    <property type="entry name" value="Adenine nucleotide alpha hydrolases-like"/>
    <property type="match status" value="1"/>
</dbReference>
<feature type="chain" id="PRO_1000092222" description="Sulfate adenylyltransferase subunit 2">
    <location>
        <begin position="1"/>
        <end position="302"/>
    </location>
</feature>
<evidence type="ECO:0000255" key="1">
    <source>
        <dbReference type="HAMAP-Rule" id="MF_00064"/>
    </source>
</evidence>
<proteinExistence type="inferred from homology"/>
<name>CYSD_SALHS</name>
<protein>
    <recommendedName>
        <fullName evidence="1">Sulfate adenylyltransferase subunit 2</fullName>
        <ecNumber evidence="1">2.7.7.4</ecNumber>
    </recommendedName>
    <alternativeName>
        <fullName evidence="1">ATP-sulfurylase small subunit</fullName>
    </alternativeName>
    <alternativeName>
        <fullName evidence="1">Sulfate adenylate transferase</fullName>
        <shortName evidence="1">SAT</shortName>
    </alternativeName>
</protein>
<reference key="1">
    <citation type="journal article" date="2011" name="J. Bacteriol.">
        <title>Comparative genomics of 28 Salmonella enterica isolates: evidence for CRISPR-mediated adaptive sublineage evolution.</title>
        <authorList>
            <person name="Fricke W.F."/>
            <person name="Mammel M.K."/>
            <person name="McDermott P.F."/>
            <person name="Tartera C."/>
            <person name="White D.G."/>
            <person name="Leclerc J.E."/>
            <person name="Ravel J."/>
            <person name="Cebula T.A."/>
        </authorList>
    </citation>
    <scope>NUCLEOTIDE SEQUENCE [LARGE SCALE GENOMIC DNA]</scope>
    <source>
        <strain>SL476</strain>
    </source>
</reference>
<organism>
    <name type="scientific">Salmonella heidelberg (strain SL476)</name>
    <dbReference type="NCBI Taxonomy" id="454169"/>
    <lineage>
        <taxon>Bacteria</taxon>
        <taxon>Pseudomonadati</taxon>
        <taxon>Pseudomonadota</taxon>
        <taxon>Gammaproteobacteria</taxon>
        <taxon>Enterobacterales</taxon>
        <taxon>Enterobacteriaceae</taxon>
        <taxon>Salmonella</taxon>
    </lineage>
</organism>
<keyword id="KW-0067">ATP-binding</keyword>
<keyword id="KW-0547">Nucleotide-binding</keyword>
<keyword id="KW-0548">Nucleotidyltransferase</keyword>
<keyword id="KW-0808">Transferase</keyword>
<sequence>MDQKRLTHLRQLEAESIHIIREVAAEFANPVMLYSIGKDSSVMLHLARKAFYPGTLPFPLLHVDTGWKFREMYAFRDRTANAYGCELLVHKNPEGVAMGINPFVHGSAKHTDIMKTEGLKQALNKYGFDAAFGGARRDEEKSRAKERIYSFRDRFHRWDPKNQRPELWRNYNGQINKGESIRVFPLSNWTEQDIWQYIWLENIDIVPLYLAAERPVLERDGMLMMVDDDRIDLQPGEVIKKRMVRFRTLGCWPLTGAVESHAQTLPEIIEEMLVSTTSERQGRMIDRDQAGSMELKKRQGYF</sequence>
<accession>B4TFX2</accession>